<protein>
    <recommendedName>
        <fullName evidence="1">Inosine-5'-monophosphate dehydrogenase</fullName>
        <shortName evidence="1">IMP dehydrogenase</shortName>
        <shortName evidence="1">IMPD</shortName>
        <shortName evidence="1">IMPDH</shortName>
        <ecNumber evidence="1">1.1.1.205</ecNumber>
    </recommendedName>
</protein>
<evidence type="ECO:0000255" key="1">
    <source>
        <dbReference type="HAMAP-Rule" id="MF_01964"/>
    </source>
</evidence>
<evidence type="ECO:0000269" key="2">
    <source>
    </source>
</evidence>
<evidence type="ECO:0000305" key="3"/>
<evidence type="ECO:0007829" key="4">
    <source>
        <dbReference type="PDB" id="1ZFJ"/>
    </source>
</evidence>
<accession>P0C0H6</accession>
<accession>P50099</accession>
<accession>P68838</accession>
<proteinExistence type="evidence at protein level"/>
<dbReference type="EC" id="1.1.1.205" evidence="1"/>
<dbReference type="EMBL" id="U26056">
    <property type="protein sequence ID" value="AAB03846.1"/>
    <property type="molecule type" value="Genomic_DNA"/>
</dbReference>
<dbReference type="PIR" id="JC4372">
    <property type="entry name" value="JC4372"/>
</dbReference>
<dbReference type="RefSeq" id="WP_002991454.1">
    <property type="nucleotide sequence ID" value="NZ_WXZK01000022.1"/>
</dbReference>
<dbReference type="PDB" id="1ZFJ">
    <property type="method" value="X-ray"/>
    <property type="resolution" value="1.90 A"/>
    <property type="chains" value="A=2-492"/>
</dbReference>
<dbReference type="PDBsum" id="1ZFJ"/>
<dbReference type="SMR" id="P0C0H6"/>
<dbReference type="STRING" id="1314.SD89_09625"/>
<dbReference type="BindingDB" id="P0C0H6"/>
<dbReference type="DrugBank" id="DB04566">
    <property type="generic name" value="Inosinic Acid"/>
</dbReference>
<dbReference type="DrugBank" id="DB04862">
    <property type="generic name" value="Merimepodib"/>
</dbReference>
<dbReference type="GeneID" id="69901624"/>
<dbReference type="eggNOG" id="COG0516">
    <property type="taxonomic scope" value="Bacteria"/>
</dbReference>
<dbReference type="eggNOG" id="COG0517">
    <property type="taxonomic scope" value="Bacteria"/>
</dbReference>
<dbReference type="OMA" id="MGYCGAK"/>
<dbReference type="BRENDA" id="1.1.1.205">
    <property type="organism ID" value="5935"/>
</dbReference>
<dbReference type="SABIO-RK" id="P0C0H6"/>
<dbReference type="UniPathway" id="UPA00601">
    <property type="reaction ID" value="UER00295"/>
</dbReference>
<dbReference type="EvolutionaryTrace" id="P0C0H6"/>
<dbReference type="GO" id="GO:0003938">
    <property type="term" value="F:IMP dehydrogenase activity"/>
    <property type="evidence" value="ECO:0007669"/>
    <property type="project" value="UniProtKB-UniRule"/>
</dbReference>
<dbReference type="GO" id="GO:0046872">
    <property type="term" value="F:metal ion binding"/>
    <property type="evidence" value="ECO:0007669"/>
    <property type="project" value="UniProtKB-UniRule"/>
</dbReference>
<dbReference type="GO" id="GO:0000166">
    <property type="term" value="F:nucleotide binding"/>
    <property type="evidence" value="ECO:0007669"/>
    <property type="project" value="UniProtKB-UniRule"/>
</dbReference>
<dbReference type="GO" id="GO:0006177">
    <property type="term" value="P:GMP biosynthetic process"/>
    <property type="evidence" value="ECO:0007669"/>
    <property type="project" value="UniProtKB-UniRule"/>
</dbReference>
<dbReference type="GO" id="GO:0006183">
    <property type="term" value="P:GTP biosynthetic process"/>
    <property type="evidence" value="ECO:0007669"/>
    <property type="project" value="TreeGrafter"/>
</dbReference>
<dbReference type="CDD" id="cd04601">
    <property type="entry name" value="CBS_pair_IMPDH"/>
    <property type="match status" value="1"/>
</dbReference>
<dbReference type="CDD" id="cd00381">
    <property type="entry name" value="IMPDH"/>
    <property type="match status" value="1"/>
</dbReference>
<dbReference type="FunFam" id="3.20.20.70:FF:000003">
    <property type="entry name" value="GMP reductase"/>
    <property type="match status" value="1"/>
</dbReference>
<dbReference type="Gene3D" id="3.20.20.70">
    <property type="entry name" value="Aldolase class I"/>
    <property type="match status" value="1"/>
</dbReference>
<dbReference type="HAMAP" id="MF_01964">
    <property type="entry name" value="IMPDH"/>
    <property type="match status" value="1"/>
</dbReference>
<dbReference type="InterPro" id="IPR013785">
    <property type="entry name" value="Aldolase_TIM"/>
</dbReference>
<dbReference type="InterPro" id="IPR000644">
    <property type="entry name" value="CBS_dom"/>
</dbReference>
<dbReference type="InterPro" id="IPR046342">
    <property type="entry name" value="CBS_dom_sf"/>
</dbReference>
<dbReference type="InterPro" id="IPR005990">
    <property type="entry name" value="IMP_DH"/>
</dbReference>
<dbReference type="InterPro" id="IPR015875">
    <property type="entry name" value="IMP_DH/GMP_Rdtase_CS"/>
</dbReference>
<dbReference type="InterPro" id="IPR001093">
    <property type="entry name" value="IMP_DH_GMPRt"/>
</dbReference>
<dbReference type="NCBIfam" id="TIGR01302">
    <property type="entry name" value="IMP_dehydrog"/>
    <property type="match status" value="1"/>
</dbReference>
<dbReference type="PANTHER" id="PTHR11911:SF111">
    <property type="entry name" value="INOSINE-5'-MONOPHOSPHATE DEHYDROGENASE"/>
    <property type="match status" value="1"/>
</dbReference>
<dbReference type="PANTHER" id="PTHR11911">
    <property type="entry name" value="INOSINE-5-MONOPHOSPHATE DEHYDROGENASE RELATED"/>
    <property type="match status" value="1"/>
</dbReference>
<dbReference type="Pfam" id="PF00571">
    <property type="entry name" value="CBS"/>
    <property type="match status" value="2"/>
</dbReference>
<dbReference type="Pfam" id="PF00478">
    <property type="entry name" value="IMPDH"/>
    <property type="match status" value="1"/>
</dbReference>
<dbReference type="PIRSF" id="PIRSF000130">
    <property type="entry name" value="IMPDH"/>
    <property type="match status" value="1"/>
</dbReference>
<dbReference type="SMART" id="SM00116">
    <property type="entry name" value="CBS"/>
    <property type="match status" value="2"/>
</dbReference>
<dbReference type="SMART" id="SM01240">
    <property type="entry name" value="IMPDH"/>
    <property type="match status" value="1"/>
</dbReference>
<dbReference type="SUPFAM" id="SSF54631">
    <property type="entry name" value="CBS-domain pair"/>
    <property type="match status" value="1"/>
</dbReference>
<dbReference type="SUPFAM" id="SSF51412">
    <property type="entry name" value="Inosine monophosphate dehydrogenase (IMPDH)"/>
    <property type="match status" value="1"/>
</dbReference>
<dbReference type="PROSITE" id="PS51371">
    <property type="entry name" value="CBS"/>
    <property type="match status" value="2"/>
</dbReference>
<dbReference type="PROSITE" id="PS00487">
    <property type="entry name" value="IMP_DH_GMP_RED"/>
    <property type="match status" value="1"/>
</dbReference>
<name>IMDH_STRPY</name>
<reference key="1">
    <citation type="journal article" date="1995" name="Gene">
        <title>Cloning, sequence analysis and expression of the group A streptococcal guaB gene encoding inosine monophosphate dehydrogenase.</title>
        <authorList>
            <person name="Ashbaugh C.D."/>
            <person name="Wessels M.R."/>
        </authorList>
    </citation>
    <scope>NUCLEOTIDE SEQUENCE [GENOMIC DNA]</scope>
</reference>
<reference key="2">
    <citation type="journal article" date="1999" name="Biochemistry">
        <title>Characteristics and crystal structure of bacterial inosine-5'-monophosphate dehydrogenase.</title>
        <authorList>
            <person name="Zhang R.G."/>
            <person name="Evans G."/>
            <person name="Rotella F.J."/>
            <person name="Westbrook E.M."/>
            <person name="Beno D."/>
            <person name="Huberman E."/>
            <person name="Joachimiak A."/>
            <person name="Collart F.R."/>
        </authorList>
    </citation>
    <scope>NUCLEOTIDE SEQUENCE [GENOMIC DNA]</scope>
    <scope>PROTEIN SEQUENCE OF 2-20</scope>
    <scope>X-RAY CRYSTALLOGRAPHY (1.9 ANGSTROMS) IN COMPLEX WITH IMP</scope>
    <scope>BIOPHYSICOCHEMICAL PROPERTIES</scope>
    <scope>MASS SPECTROMETRY</scope>
    <scope>SUBUNIT</scope>
    <scope>MUTAGENESIS OF ARG-406; GLU-421 AND TYR-450</scope>
</reference>
<keyword id="KW-0002">3D-structure</keyword>
<keyword id="KW-0129">CBS domain</keyword>
<keyword id="KW-0903">Direct protein sequencing</keyword>
<keyword id="KW-0332">GMP biosynthesis</keyword>
<keyword id="KW-0479">Metal-binding</keyword>
<keyword id="KW-0520">NAD</keyword>
<keyword id="KW-0560">Oxidoreductase</keyword>
<keyword id="KW-0630">Potassium</keyword>
<keyword id="KW-0658">Purine biosynthesis</keyword>
<keyword id="KW-0677">Repeat</keyword>
<organism>
    <name type="scientific">Streptococcus pyogenes</name>
    <dbReference type="NCBI Taxonomy" id="1314"/>
    <lineage>
        <taxon>Bacteria</taxon>
        <taxon>Bacillati</taxon>
        <taxon>Bacillota</taxon>
        <taxon>Bacilli</taxon>
        <taxon>Lactobacillales</taxon>
        <taxon>Streptococcaceae</taxon>
        <taxon>Streptococcus</taxon>
    </lineage>
</organism>
<feature type="initiator methionine" description="Removed" evidence="2">
    <location>
        <position position="1"/>
    </location>
</feature>
<feature type="chain" id="PRO_0000093714" description="Inosine-5'-monophosphate dehydrogenase">
    <location>
        <begin position="2"/>
        <end position="493"/>
    </location>
</feature>
<feature type="domain" description="CBS 1" evidence="1">
    <location>
        <begin position="97"/>
        <end position="155"/>
    </location>
</feature>
<feature type="domain" description="CBS 2" evidence="1">
    <location>
        <begin position="159"/>
        <end position="219"/>
    </location>
</feature>
<feature type="active site" description="Thioimidate intermediate" evidence="1">
    <location>
        <position position="310"/>
    </location>
</feature>
<feature type="active site" description="Proton acceptor" evidence="1">
    <location>
        <position position="406"/>
    </location>
</feature>
<feature type="binding site" evidence="1">
    <location>
        <position position="253"/>
    </location>
    <ligand>
        <name>NAD(+)</name>
        <dbReference type="ChEBI" id="CHEBI:57540"/>
    </ligand>
</feature>
<feature type="binding site" evidence="1">
    <location>
        <begin position="303"/>
        <end position="305"/>
    </location>
    <ligand>
        <name>NAD(+)</name>
        <dbReference type="ChEBI" id="CHEBI:57540"/>
    </ligand>
</feature>
<feature type="binding site" description="in other chain" evidence="1">
    <location>
        <position position="305"/>
    </location>
    <ligand>
        <name>K(+)</name>
        <dbReference type="ChEBI" id="CHEBI:29103"/>
        <note>ligand shared between two tetrameric partners</note>
    </ligand>
</feature>
<feature type="binding site" description="in other chain" evidence="1">
    <location>
        <position position="307"/>
    </location>
    <ligand>
        <name>K(+)</name>
        <dbReference type="ChEBI" id="CHEBI:29103"/>
        <note>ligand shared between two tetrameric partners</note>
    </ligand>
</feature>
<feature type="binding site" evidence="1 2">
    <location>
        <position position="308"/>
    </location>
    <ligand>
        <name>IMP</name>
        <dbReference type="ChEBI" id="CHEBI:58053"/>
    </ligand>
</feature>
<feature type="binding site" description="in other chain" evidence="1">
    <location>
        <position position="310"/>
    </location>
    <ligand>
        <name>K(+)</name>
        <dbReference type="ChEBI" id="CHEBI:29103"/>
        <note>ligand shared between two tetrameric partners</note>
    </ligand>
</feature>
<feature type="binding site">
    <location>
        <begin position="343"/>
        <end position="345"/>
    </location>
    <ligand>
        <name>IMP</name>
        <dbReference type="ChEBI" id="CHEBI:58053"/>
    </ligand>
</feature>
<feature type="binding site">
    <location>
        <begin position="366"/>
        <end position="367"/>
    </location>
    <ligand>
        <name>IMP</name>
        <dbReference type="ChEBI" id="CHEBI:58053"/>
    </ligand>
</feature>
<feature type="binding site">
    <location>
        <begin position="390"/>
        <end position="394"/>
    </location>
    <ligand>
        <name>IMP</name>
        <dbReference type="ChEBI" id="CHEBI:58053"/>
    </ligand>
</feature>
<feature type="binding site" evidence="1">
    <location>
        <position position="421"/>
    </location>
    <ligand>
        <name>IMP</name>
        <dbReference type="ChEBI" id="CHEBI:58053"/>
    </ligand>
</feature>
<feature type="binding site" evidence="1">
    <location>
        <position position="475"/>
    </location>
    <ligand>
        <name>K(+)</name>
        <dbReference type="ChEBI" id="CHEBI:29103"/>
        <note>ligand shared between two tetrameric partners</note>
    </ligand>
</feature>
<feature type="binding site" evidence="1">
    <location>
        <position position="476"/>
    </location>
    <ligand>
        <name>K(+)</name>
        <dbReference type="ChEBI" id="CHEBI:29103"/>
        <note>ligand shared between two tetrameric partners</note>
    </ligand>
</feature>
<feature type="binding site" evidence="1">
    <location>
        <position position="477"/>
    </location>
    <ligand>
        <name>K(+)</name>
        <dbReference type="ChEBI" id="CHEBI:29103"/>
        <note>ligand shared between two tetrameric partners</note>
    </ligand>
</feature>
<feature type="mutagenesis site" description="No activity." evidence="2">
    <original>R</original>
    <variation>A</variation>
    <location>
        <position position="406"/>
    </location>
</feature>
<feature type="mutagenesis site" description="No activity." evidence="2">
    <original>E</original>
    <variation>Q</variation>
    <location>
        <position position="421"/>
    </location>
</feature>
<feature type="mutagenesis site" description="No effect." evidence="2">
    <original>Y</original>
    <variation>A</variation>
    <location>
        <position position="450"/>
    </location>
</feature>
<feature type="mutagenesis site" description="Reduces activity by 75%." evidence="2">
    <original>Y</original>
    <variation>D</variation>
    <location>
        <position position="450"/>
    </location>
</feature>
<feature type="sequence conflict" description="In Ref. 2; no nucleotide entry." evidence="3" ref="2">
    <original>V</original>
    <variation>L</variation>
    <location>
        <position position="419"/>
    </location>
</feature>
<feature type="helix" evidence="4">
    <location>
        <begin position="3"/>
        <end position="6"/>
    </location>
</feature>
<feature type="helix" evidence="4">
    <location>
        <begin position="15"/>
        <end position="17"/>
    </location>
</feature>
<feature type="strand" evidence="4">
    <location>
        <begin position="18"/>
        <end position="20"/>
    </location>
</feature>
<feature type="helix" evidence="4">
    <location>
        <begin position="29"/>
        <end position="31"/>
    </location>
</feature>
<feature type="strand" evidence="4">
    <location>
        <begin position="36"/>
        <end position="39"/>
    </location>
</feature>
<feature type="strand" evidence="4">
    <location>
        <begin position="42"/>
        <end position="50"/>
    </location>
</feature>
<feature type="turn" evidence="4">
    <location>
        <begin position="54"/>
        <end position="56"/>
    </location>
</feature>
<feature type="helix" evidence="4">
    <location>
        <begin position="59"/>
        <end position="67"/>
    </location>
</feature>
<feature type="strand" evidence="4">
    <location>
        <begin position="71"/>
        <end position="74"/>
    </location>
</feature>
<feature type="helix" evidence="4">
    <location>
        <begin position="80"/>
        <end position="93"/>
    </location>
</feature>
<feature type="turn" evidence="4">
    <location>
        <begin position="94"/>
        <end position="97"/>
    </location>
</feature>
<feature type="strand" evidence="4">
    <location>
        <begin position="98"/>
        <end position="100"/>
    </location>
</feature>
<feature type="strand" evidence="4">
    <location>
        <begin position="106"/>
        <end position="109"/>
    </location>
</feature>
<feature type="helix" evidence="4">
    <location>
        <begin position="110"/>
        <end position="119"/>
    </location>
</feature>
<feature type="strand" evidence="4">
    <location>
        <begin position="123"/>
        <end position="129"/>
    </location>
</feature>
<feature type="turn" evidence="4">
    <location>
        <begin position="131"/>
        <end position="133"/>
    </location>
</feature>
<feature type="strand" evidence="4">
    <location>
        <begin position="135"/>
        <end position="141"/>
    </location>
</feature>
<feature type="helix" evidence="4">
    <location>
        <begin position="142"/>
        <end position="147"/>
    </location>
</feature>
<feature type="strand" evidence="4">
    <location>
        <begin position="151"/>
        <end position="154"/>
    </location>
</feature>
<feature type="turn" evidence="4">
    <location>
        <begin position="155"/>
        <end position="157"/>
    </location>
</feature>
<feature type="helix" evidence="4">
    <location>
        <begin position="173"/>
        <end position="182"/>
    </location>
</feature>
<feature type="strand" evidence="4">
    <location>
        <begin position="186"/>
        <end position="191"/>
    </location>
</feature>
<feature type="strand" evidence="4">
    <location>
        <begin position="195"/>
        <end position="202"/>
    </location>
</feature>
<feature type="helix" evidence="4">
    <location>
        <begin position="203"/>
        <end position="211"/>
    </location>
</feature>
<feature type="strand" evidence="4">
    <location>
        <begin position="226"/>
        <end position="229"/>
    </location>
</feature>
<feature type="helix" evidence="4">
    <location>
        <begin position="235"/>
        <end position="245"/>
    </location>
</feature>
<feature type="strand" evidence="4">
    <location>
        <begin position="248"/>
        <end position="252"/>
    </location>
</feature>
<feature type="helix" evidence="4">
    <location>
        <begin position="260"/>
        <end position="272"/>
    </location>
</feature>
<feature type="strand" evidence="4">
    <location>
        <begin position="274"/>
        <end position="276"/>
    </location>
</feature>
<feature type="strand" evidence="4">
    <location>
        <begin position="278"/>
        <end position="283"/>
    </location>
</feature>
<feature type="helix" evidence="4">
    <location>
        <begin position="286"/>
        <end position="294"/>
    </location>
</feature>
<feature type="strand" evidence="4">
    <location>
        <begin position="298"/>
        <end position="302"/>
    </location>
</feature>
<feature type="helix" evidence="4">
    <location>
        <begin position="312"/>
        <end position="315"/>
    </location>
</feature>
<feature type="helix" evidence="4">
    <location>
        <begin position="322"/>
        <end position="335"/>
    </location>
</feature>
<feature type="strand" evidence="4">
    <location>
        <begin position="339"/>
        <end position="344"/>
    </location>
</feature>
<feature type="helix" evidence="4">
    <location>
        <begin position="349"/>
        <end position="357"/>
    </location>
</feature>
<feature type="strand" evidence="4">
    <location>
        <begin position="361"/>
        <end position="366"/>
    </location>
</feature>
<feature type="turn" evidence="4">
    <location>
        <begin position="367"/>
        <end position="371"/>
    </location>
</feature>
<feature type="strand" evidence="4">
    <location>
        <begin position="372"/>
        <end position="374"/>
    </location>
</feature>
<feature type="strand" evidence="4">
    <location>
        <begin position="379"/>
        <end position="382"/>
    </location>
</feature>
<feature type="strand" evidence="4">
    <location>
        <begin position="385"/>
        <end position="391"/>
    </location>
</feature>
<feature type="helix" evidence="4">
    <location>
        <begin position="396"/>
        <end position="399"/>
    </location>
</feature>
<feature type="strand" evidence="4">
    <location>
        <begin position="424"/>
        <end position="428"/>
    </location>
</feature>
<feature type="helix" evidence="4">
    <location>
        <begin position="433"/>
        <end position="450"/>
    </location>
</feature>
<feature type="helix" evidence="4">
    <location>
        <begin position="456"/>
        <end position="462"/>
    </location>
</feature>
<feature type="strand" evidence="4">
    <location>
        <begin position="465"/>
        <end position="467"/>
    </location>
</feature>
<feature type="helix" evidence="4">
    <location>
        <begin position="470"/>
        <end position="476"/>
    </location>
</feature>
<comment type="function">
    <text evidence="1">Catalyzes the conversion of inosine 5'-phosphate (IMP) to xanthosine 5'-phosphate (XMP), the first committed and rate-limiting step in the de novo synthesis of guanine nucleotides, and therefore plays an important role in the regulation of cell growth.</text>
</comment>
<comment type="catalytic activity">
    <reaction evidence="1">
        <text>IMP + NAD(+) + H2O = XMP + NADH + H(+)</text>
        <dbReference type="Rhea" id="RHEA:11708"/>
        <dbReference type="ChEBI" id="CHEBI:15377"/>
        <dbReference type="ChEBI" id="CHEBI:15378"/>
        <dbReference type="ChEBI" id="CHEBI:57464"/>
        <dbReference type="ChEBI" id="CHEBI:57540"/>
        <dbReference type="ChEBI" id="CHEBI:57945"/>
        <dbReference type="ChEBI" id="CHEBI:58053"/>
        <dbReference type="EC" id="1.1.1.205"/>
    </reaction>
</comment>
<comment type="cofactor">
    <cofactor evidence="1">
        <name>K(+)</name>
        <dbReference type="ChEBI" id="CHEBI:29103"/>
    </cofactor>
</comment>
<comment type="activity regulation">
    <text evidence="1">Mycophenolic acid (MPA) is a non-competitive inhibitor that prevents formation of the closed enzyme conformation by binding to the same site as the amobile flap. In contrast, mizoribine monophosphate (MZP) is a competitive inhibitor that induces the closed conformation. MPA is a potent inhibitor of mammalian IMPDHs but a poor inhibitor of the bacterial enzymes. MZP is a more potent inhibitor of bacterial IMPDH.</text>
</comment>
<comment type="biophysicochemical properties">
    <kinetics>
        <KM evidence="2">62 uM for Inosine 5'-phosphate</KM>
        <KM evidence="2">1180 uM for NAD(+)</KM>
    </kinetics>
    <phDependence>
        <text evidence="2">Optimum pH is 7.8.</text>
    </phDependence>
</comment>
<comment type="pathway">
    <text evidence="1">Purine metabolism; XMP biosynthesis via de novo pathway; XMP from IMP: step 1/1.</text>
</comment>
<comment type="subunit">
    <text evidence="1 2">Homotetramer.</text>
</comment>
<comment type="mass spectrometry"/>
<comment type="similarity">
    <text evidence="1">Belongs to the IMPDH/GMPR family.</text>
</comment>
<sequence>MSNWDTKFLKKGYTFDDVLLIPAESHVLPNEVDLKTKLADNLTLNIPIITAAMDTVTGSKMAIAIARAGGLGVIHKNMSITEQAEEVRKVKRSENGVIIDPFFLTPEHKVSEAEELMQRYRISGVPIVETLANRKLVGIITNRDMRFISDYNAPISEHMTSEHLVTAAVGTDLETAERILHEHRIEKLPLVDNSGRLSGLITIKDIEKVIEFPHAAKDEFGRLLVAAAVGVTSDTFERAEALFEAGADAIVIDTAHGHSAGVLRKIAEIRAHFPNRTLIAGNIATAEGARALYDAGVDVVKVGIGPGSICTTRVVAGVGVPQVTAIYDAAAVAREYGKTIIADGGIKYSGDIVKALAAGGNAVMLGSMFAGTDEAPGETEIYQGRKFKTYRGMGSIAAMKKGSSDRYFQGSVNEANKLVPEGIEGRVAYKGAASDIVFQMLGGIRSGMGYVGAGDIQELHENAQFVEMSGAGLIESHPHDVQITNEAPNYSVH</sequence>
<gene>
    <name evidence="1" type="primary">guaB</name>
    <name type="synonym">impD</name>
</gene>